<feature type="chain" id="PRO_0000341712" description="2-succinyl-5-enolpyruvyl-6-hydroxy-3-cyclohexene-1-carboxylate synthase">
    <location>
        <begin position="1"/>
        <end position="584"/>
    </location>
</feature>
<sequence length="584" mass="65040">MNNHIEALSYYLGAFVDELTRLNVCDVVISPGSRSTPIALLMEQHEGMNTYLHVDERSAGFFALGIAKAKKRPVALLCTSGTAAANYYPAVCEAFHSRVPLIVLTADRPHELRDVGAPQAMNQINLYGTFVKQFTEMALPEASEAMYHYARMTTQRMIASACLAPQGPVHLNFPVREPLIPDFSLESLWDKGRGEYTGVVQQGNAVMPSEYVDSLVGRLSHMKKGLIICGDDSHSEIATFATQLAEKTGYPILADPLSNIRSGHHDKTMVIDCYDTFLRNELLKETWKPDVLIRFGGMPVSKALTQFIKKQTKAVHIVVDESGQWRDPALVATEVVQASDIAFCSALIEKMPVMKKNDWFRMWQHINEKTKETLREMETYDTAFEGRVITDIVRVLPEGATLFASNSMPIRDTDSFFFTSDKTIQVMANRGVNGIDGIISTALGASMICDPLVLVIGDLSFYHDLNGLLAAKLHELNITIVVVNNDGGGIFSFLPQYEKKEHFESLFGTPIGLDYEHVVTMYGGSFSRVNGWEQFREEVQKGATTEGLHVVEICTNRDENVTLHRKLWAKTQDVITTSLQGESK</sequence>
<gene>
    <name evidence="1" type="primary">menD</name>
    <name type="ordered locus">BT9727_4588</name>
</gene>
<accession>Q6HC26</accession>
<proteinExistence type="inferred from homology"/>
<dbReference type="EC" id="2.2.1.9" evidence="1"/>
<dbReference type="EMBL" id="AE017355">
    <property type="protein sequence ID" value="AAT60997.1"/>
    <property type="molecule type" value="Genomic_DNA"/>
</dbReference>
<dbReference type="RefSeq" id="WP_001059249.1">
    <property type="nucleotide sequence ID" value="NC_005957.1"/>
</dbReference>
<dbReference type="RefSeq" id="YP_038900.1">
    <property type="nucleotide sequence ID" value="NC_005957.1"/>
</dbReference>
<dbReference type="SMR" id="Q6HC26"/>
<dbReference type="KEGG" id="btk:BT9727_4588"/>
<dbReference type="PATRIC" id="fig|281309.8.peg.4886"/>
<dbReference type="HOGENOM" id="CLU_006051_3_0_9"/>
<dbReference type="UniPathway" id="UPA00079"/>
<dbReference type="UniPathway" id="UPA01057">
    <property type="reaction ID" value="UER00164"/>
</dbReference>
<dbReference type="Proteomes" id="UP000001301">
    <property type="component" value="Chromosome"/>
</dbReference>
<dbReference type="GO" id="GO:0070204">
    <property type="term" value="F:2-succinyl-5-enolpyruvyl-6-hydroxy-3-cyclohexene-1-carboxylic-acid synthase activity"/>
    <property type="evidence" value="ECO:0007669"/>
    <property type="project" value="UniProtKB-UniRule"/>
</dbReference>
<dbReference type="GO" id="GO:0000287">
    <property type="term" value="F:magnesium ion binding"/>
    <property type="evidence" value="ECO:0007669"/>
    <property type="project" value="UniProtKB-UniRule"/>
</dbReference>
<dbReference type="GO" id="GO:0030145">
    <property type="term" value="F:manganese ion binding"/>
    <property type="evidence" value="ECO:0007669"/>
    <property type="project" value="UniProtKB-UniRule"/>
</dbReference>
<dbReference type="GO" id="GO:0030976">
    <property type="term" value="F:thiamine pyrophosphate binding"/>
    <property type="evidence" value="ECO:0007669"/>
    <property type="project" value="UniProtKB-UniRule"/>
</dbReference>
<dbReference type="GO" id="GO:0009234">
    <property type="term" value="P:menaquinone biosynthetic process"/>
    <property type="evidence" value="ECO:0007669"/>
    <property type="project" value="UniProtKB-UniRule"/>
</dbReference>
<dbReference type="CDD" id="cd07037">
    <property type="entry name" value="TPP_PYR_MenD"/>
    <property type="match status" value="1"/>
</dbReference>
<dbReference type="CDD" id="cd02009">
    <property type="entry name" value="TPP_SHCHC_synthase"/>
    <property type="match status" value="1"/>
</dbReference>
<dbReference type="Gene3D" id="3.40.50.970">
    <property type="match status" value="2"/>
</dbReference>
<dbReference type="Gene3D" id="3.40.50.1220">
    <property type="entry name" value="TPP-binding domain"/>
    <property type="match status" value="1"/>
</dbReference>
<dbReference type="HAMAP" id="MF_01659">
    <property type="entry name" value="MenD"/>
    <property type="match status" value="1"/>
</dbReference>
<dbReference type="InterPro" id="IPR029035">
    <property type="entry name" value="DHS-like_NAD/FAD-binding_dom"/>
</dbReference>
<dbReference type="InterPro" id="IPR004433">
    <property type="entry name" value="MenaQ_synth_MenD"/>
</dbReference>
<dbReference type="InterPro" id="IPR032264">
    <property type="entry name" value="MenD_middle"/>
</dbReference>
<dbReference type="InterPro" id="IPR029061">
    <property type="entry name" value="THDP-binding"/>
</dbReference>
<dbReference type="InterPro" id="IPR012001">
    <property type="entry name" value="Thiamin_PyroP_enz_TPP-bd_dom"/>
</dbReference>
<dbReference type="InterPro" id="IPR011766">
    <property type="entry name" value="TPP_enzyme_TPP-bd"/>
</dbReference>
<dbReference type="NCBIfam" id="TIGR00173">
    <property type="entry name" value="menD"/>
    <property type="match status" value="1"/>
</dbReference>
<dbReference type="PANTHER" id="PTHR42916">
    <property type="entry name" value="2-SUCCINYL-5-ENOLPYRUVYL-6-HYDROXY-3-CYCLOHEXENE-1-CARBOXYLATE SYNTHASE"/>
    <property type="match status" value="1"/>
</dbReference>
<dbReference type="PANTHER" id="PTHR42916:SF1">
    <property type="entry name" value="PROTEIN PHYLLO, CHLOROPLASTIC"/>
    <property type="match status" value="1"/>
</dbReference>
<dbReference type="Pfam" id="PF02775">
    <property type="entry name" value="TPP_enzyme_C"/>
    <property type="match status" value="1"/>
</dbReference>
<dbReference type="Pfam" id="PF16582">
    <property type="entry name" value="TPP_enzyme_M_2"/>
    <property type="match status" value="1"/>
</dbReference>
<dbReference type="Pfam" id="PF02776">
    <property type="entry name" value="TPP_enzyme_N"/>
    <property type="match status" value="1"/>
</dbReference>
<dbReference type="PIRSF" id="PIRSF004983">
    <property type="entry name" value="MenD"/>
    <property type="match status" value="1"/>
</dbReference>
<dbReference type="SUPFAM" id="SSF52467">
    <property type="entry name" value="DHS-like NAD/FAD-binding domain"/>
    <property type="match status" value="1"/>
</dbReference>
<dbReference type="SUPFAM" id="SSF52518">
    <property type="entry name" value="Thiamin diphosphate-binding fold (THDP-binding)"/>
    <property type="match status" value="2"/>
</dbReference>
<keyword id="KW-0460">Magnesium</keyword>
<keyword id="KW-0464">Manganese</keyword>
<keyword id="KW-0474">Menaquinone biosynthesis</keyword>
<keyword id="KW-0479">Metal-binding</keyword>
<keyword id="KW-0786">Thiamine pyrophosphate</keyword>
<keyword id="KW-0808">Transferase</keyword>
<comment type="function">
    <text evidence="1">Catalyzes the thiamine diphosphate-dependent decarboxylation of 2-oxoglutarate and the subsequent addition of the resulting succinic semialdehyde-thiamine pyrophosphate anion to isochorismate to yield 2-succinyl-5-enolpyruvyl-6-hydroxy-3-cyclohexene-1-carboxylate (SEPHCHC).</text>
</comment>
<comment type="catalytic activity">
    <reaction evidence="1">
        <text>isochorismate + 2-oxoglutarate + H(+) = 5-enolpyruvoyl-6-hydroxy-2-succinyl-cyclohex-3-ene-1-carboxylate + CO2</text>
        <dbReference type="Rhea" id="RHEA:25593"/>
        <dbReference type="ChEBI" id="CHEBI:15378"/>
        <dbReference type="ChEBI" id="CHEBI:16526"/>
        <dbReference type="ChEBI" id="CHEBI:16810"/>
        <dbReference type="ChEBI" id="CHEBI:29780"/>
        <dbReference type="ChEBI" id="CHEBI:58818"/>
        <dbReference type="EC" id="2.2.1.9"/>
    </reaction>
</comment>
<comment type="cofactor">
    <cofactor evidence="1">
        <name>Mg(2+)</name>
        <dbReference type="ChEBI" id="CHEBI:18420"/>
    </cofactor>
    <cofactor evidence="1">
        <name>Mn(2+)</name>
        <dbReference type="ChEBI" id="CHEBI:29035"/>
    </cofactor>
</comment>
<comment type="cofactor">
    <cofactor evidence="1">
        <name>thiamine diphosphate</name>
        <dbReference type="ChEBI" id="CHEBI:58937"/>
    </cofactor>
    <text evidence="1">Binds 1 thiamine pyrophosphate per subunit.</text>
</comment>
<comment type="pathway">
    <text evidence="1">Quinol/quinone metabolism; 1,4-dihydroxy-2-naphthoate biosynthesis; 1,4-dihydroxy-2-naphthoate from chorismate: step 2/7.</text>
</comment>
<comment type="pathway">
    <text evidence="1">Quinol/quinone metabolism; menaquinone biosynthesis.</text>
</comment>
<comment type="subunit">
    <text evidence="1">Homodimer.</text>
</comment>
<comment type="similarity">
    <text evidence="1">Belongs to the TPP enzyme family. MenD subfamily.</text>
</comment>
<name>MEND_BACHK</name>
<protein>
    <recommendedName>
        <fullName evidence="1">2-succinyl-5-enolpyruvyl-6-hydroxy-3-cyclohexene-1-carboxylate synthase</fullName>
        <shortName evidence="1">SEPHCHC synthase</shortName>
        <ecNumber evidence="1">2.2.1.9</ecNumber>
    </recommendedName>
    <alternativeName>
        <fullName evidence="1">Menaquinone biosynthesis protein MenD</fullName>
    </alternativeName>
</protein>
<reference key="1">
    <citation type="journal article" date="2006" name="J. Bacteriol.">
        <title>Pathogenomic sequence analysis of Bacillus cereus and Bacillus thuringiensis isolates closely related to Bacillus anthracis.</title>
        <authorList>
            <person name="Han C.S."/>
            <person name="Xie G."/>
            <person name="Challacombe J.F."/>
            <person name="Altherr M.R."/>
            <person name="Bhotika S.S."/>
            <person name="Bruce D."/>
            <person name="Campbell C.S."/>
            <person name="Campbell M.L."/>
            <person name="Chen J."/>
            <person name="Chertkov O."/>
            <person name="Cleland C."/>
            <person name="Dimitrijevic M."/>
            <person name="Doggett N.A."/>
            <person name="Fawcett J.J."/>
            <person name="Glavina T."/>
            <person name="Goodwin L.A."/>
            <person name="Hill K.K."/>
            <person name="Hitchcock P."/>
            <person name="Jackson P.J."/>
            <person name="Keim P."/>
            <person name="Kewalramani A.R."/>
            <person name="Longmire J."/>
            <person name="Lucas S."/>
            <person name="Malfatti S."/>
            <person name="McMurry K."/>
            <person name="Meincke L.J."/>
            <person name="Misra M."/>
            <person name="Moseman B.L."/>
            <person name="Mundt M."/>
            <person name="Munk A.C."/>
            <person name="Okinaka R.T."/>
            <person name="Parson-Quintana B."/>
            <person name="Reilly L.P."/>
            <person name="Richardson P."/>
            <person name="Robinson D.L."/>
            <person name="Rubin E."/>
            <person name="Saunders E."/>
            <person name="Tapia R."/>
            <person name="Tesmer J.G."/>
            <person name="Thayer N."/>
            <person name="Thompson L.S."/>
            <person name="Tice H."/>
            <person name="Ticknor L.O."/>
            <person name="Wills P.L."/>
            <person name="Brettin T.S."/>
            <person name="Gilna P."/>
        </authorList>
    </citation>
    <scope>NUCLEOTIDE SEQUENCE [LARGE SCALE GENOMIC DNA]</scope>
    <source>
        <strain>97-27</strain>
    </source>
</reference>
<organism>
    <name type="scientific">Bacillus thuringiensis subsp. konkukian (strain 97-27)</name>
    <dbReference type="NCBI Taxonomy" id="281309"/>
    <lineage>
        <taxon>Bacteria</taxon>
        <taxon>Bacillati</taxon>
        <taxon>Bacillota</taxon>
        <taxon>Bacilli</taxon>
        <taxon>Bacillales</taxon>
        <taxon>Bacillaceae</taxon>
        <taxon>Bacillus</taxon>
        <taxon>Bacillus cereus group</taxon>
    </lineage>
</organism>
<evidence type="ECO:0000255" key="1">
    <source>
        <dbReference type="HAMAP-Rule" id="MF_01659"/>
    </source>
</evidence>